<proteinExistence type="inferred from homology"/>
<name>RS19_FINM2</name>
<comment type="function">
    <text evidence="1">Protein S19 forms a complex with S13 that binds strongly to the 16S ribosomal RNA.</text>
</comment>
<comment type="similarity">
    <text evidence="1">Belongs to the universal ribosomal protein uS19 family.</text>
</comment>
<sequence>MSRSLKKGPFCDEHLMKKVEELNKNDEKKIIKTWSRRSTIFPNFVGHTIAVHDGRKHVPVYITDDMVGHKLGEFVPTRTYKGHIKNEKTSKVRN</sequence>
<feature type="chain" id="PRO_1000127980" description="Small ribosomal subunit protein uS19">
    <location>
        <begin position="1"/>
        <end position="94"/>
    </location>
</feature>
<reference key="1">
    <citation type="journal article" date="2008" name="DNA Res.">
        <title>Complete genome sequence of Finegoldia magna, an anaerobic opportunistic pathogen.</title>
        <authorList>
            <person name="Goto T."/>
            <person name="Yamashita A."/>
            <person name="Hirakawa H."/>
            <person name="Matsutani M."/>
            <person name="Todo K."/>
            <person name="Ohshima K."/>
            <person name="Toh H."/>
            <person name="Miyamoto K."/>
            <person name="Kuhara S."/>
            <person name="Hattori M."/>
            <person name="Shimizu T."/>
            <person name="Akimoto S."/>
        </authorList>
    </citation>
    <scope>NUCLEOTIDE SEQUENCE [LARGE SCALE GENOMIC DNA]</scope>
    <source>
        <strain>ATCC 29328 / DSM 20472 / WAL 2508</strain>
    </source>
</reference>
<gene>
    <name evidence="1" type="primary">rpsS</name>
    <name type="ordered locus">FMG_0159</name>
</gene>
<keyword id="KW-1185">Reference proteome</keyword>
<keyword id="KW-0687">Ribonucleoprotein</keyword>
<keyword id="KW-0689">Ribosomal protein</keyword>
<keyword id="KW-0694">RNA-binding</keyword>
<keyword id="KW-0699">rRNA-binding</keyword>
<organism>
    <name type="scientific">Finegoldia magna (strain ATCC 29328 / DSM 20472 / WAL 2508)</name>
    <name type="common">Peptostreptococcus magnus</name>
    <dbReference type="NCBI Taxonomy" id="334413"/>
    <lineage>
        <taxon>Bacteria</taxon>
        <taxon>Bacillati</taxon>
        <taxon>Bacillota</taxon>
        <taxon>Tissierellia</taxon>
        <taxon>Tissierellales</taxon>
        <taxon>Peptoniphilaceae</taxon>
        <taxon>Finegoldia</taxon>
    </lineage>
</organism>
<evidence type="ECO:0000255" key="1">
    <source>
        <dbReference type="HAMAP-Rule" id="MF_00531"/>
    </source>
</evidence>
<evidence type="ECO:0000305" key="2"/>
<dbReference type="EMBL" id="AP008971">
    <property type="protein sequence ID" value="BAG07577.1"/>
    <property type="molecule type" value="Genomic_DNA"/>
</dbReference>
<dbReference type="RefSeq" id="WP_002836113.1">
    <property type="nucleotide sequence ID" value="NC_010376.1"/>
</dbReference>
<dbReference type="SMR" id="B0RZU4"/>
<dbReference type="STRING" id="334413.FMG_0159"/>
<dbReference type="GeneID" id="60839394"/>
<dbReference type="KEGG" id="fma:FMG_0159"/>
<dbReference type="eggNOG" id="COG0185">
    <property type="taxonomic scope" value="Bacteria"/>
</dbReference>
<dbReference type="HOGENOM" id="CLU_144911_0_1_9"/>
<dbReference type="Proteomes" id="UP000001319">
    <property type="component" value="Chromosome"/>
</dbReference>
<dbReference type="GO" id="GO:0005737">
    <property type="term" value="C:cytoplasm"/>
    <property type="evidence" value="ECO:0007669"/>
    <property type="project" value="UniProtKB-ARBA"/>
</dbReference>
<dbReference type="GO" id="GO:0015935">
    <property type="term" value="C:small ribosomal subunit"/>
    <property type="evidence" value="ECO:0007669"/>
    <property type="project" value="InterPro"/>
</dbReference>
<dbReference type="GO" id="GO:0019843">
    <property type="term" value="F:rRNA binding"/>
    <property type="evidence" value="ECO:0007669"/>
    <property type="project" value="UniProtKB-UniRule"/>
</dbReference>
<dbReference type="GO" id="GO:0003735">
    <property type="term" value="F:structural constituent of ribosome"/>
    <property type="evidence" value="ECO:0007669"/>
    <property type="project" value="InterPro"/>
</dbReference>
<dbReference type="GO" id="GO:0000028">
    <property type="term" value="P:ribosomal small subunit assembly"/>
    <property type="evidence" value="ECO:0007669"/>
    <property type="project" value="TreeGrafter"/>
</dbReference>
<dbReference type="GO" id="GO:0006412">
    <property type="term" value="P:translation"/>
    <property type="evidence" value="ECO:0007669"/>
    <property type="project" value="UniProtKB-UniRule"/>
</dbReference>
<dbReference type="FunFam" id="3.30.860.10:FF:000001">
    <property type="entry name" value="30S ribosomal protein S19"/>
    <property type="match status" value="1"/>
</dbReference>
<dbReference type="Gene3D" id="3.30.860.10">
    <property type="entry name" value="30s Ribosomal Protein S19, Chain A"/>
    <property type="match status" value="1"/>
</dbReference>
<dbReference type="HAMAP" id="MF_00531">
    <property type="entry name" value="Ribosomal_uS19"/>
    <property type="match status" value="1"/>
</dbReference>
<dbReference type="InterPro" id="IPR002222">
    <property type="entry name" value="Ribosomal_uS19"/>
</dbReference>
<dbReference type="InterPro" id="IPR005732">
    <property type="entry name" value="Ribosomal_uS19_bac-type"/>
</dbReference>
<dbReference type="InterPro" id="IPR020934">
    <property type="entry name" value="Ribosomal_uS19_CS"/>
</dbReference>
<dbReference type="InterPro" id="IPR023575">
    <property type="entry name" value="Ribosomal_uS19_SF"/>
</dbReference>
<dbReference type="NCBIfam" id="TIGR01050">
    <property type="entry name" value="rpsS_bact"/>
    <property type="match status" value="1"/>
</dbReference>
<dbReference type="PANTHER" id="PTHR11880">
    <property type="entry name" value="RIBOSOMAL PROTEIN S19P FAMILY MEMBER"/>
    <property type="match status" value="1"/>
</dbReference>
<dbReference type="PANTHER" id="PTHR11880:SF8">
    <property type="entry name" value="SMALL RIBOSOMAL SUBUNIT PROTEIN US19M"/>
    <property type="match status" value="1"/>
</dbReference>
<dbReference type="Pfam" id="PF00203">
    <property type="entry name" value="Ribosomal_S19"/>
    <property type="match status" value="1"/>
</dbReference>
<dbReference type="PIRSF" id="PIRSF002144">
    <property type="entry name" value="Ribosomal_S19"/>
    <property type="match status" value="1"/>
</dbReference>
<dbReference type="PRINTS" id="PR00975">
    <property type="entry name" value="RIBOSOMALS19"/>
</dbReference>
<dbReference type="SUPFAM" id="SSF54570">
    <property type="entry name" value="Ribosomal protein S19"/>
    <property type="match status" value="1"/>
</dbReference>
<dbReference type="PROSITE" id="PS00323">
    <property type="entry name" value="RIBOSOMAL_S19"/>
    <property type="match status" value="1"/>
</dbReference>
<accession>B0RZU4</accession>
<protein>
    <recommendedName>
        <fullName evidence="1">Small ribosomal subunit protein uS19</fullName>
    </recommendedName>
    <alternativeName>
        <fullName evidence="2">30S ribosomal protein S19</fullName>
    </alternativeName>
</protein>